<keyword id="KW-0240">DNA-directed RNA polymerase</keyword>
<keyword id="KW-0479">Metal-binding</keyword>
<keyword id="KW-0548">Nucleotidyltransferase</keyword>
<keyword id="KW-1185">Reference proteome</keyword>
<keyword id="KW-0804">Transcription</keyword>
<keyword id="KW-0808">Transferase</keyword>
<keyword id="KW-0862">Zinc</keyword>
<name>RPOC2_CROS5</name>
<comment type="function">
    <text evidence="1">DNA-dependent RNA polymerase catalyzes the transcription of DNA into RNA using the four ribonucleoside triphosphates as substrates.</text>
</comment>
<comment type="catalytic activity">
    <reaction evidence="1">
        <text>RNA(n) + a ribonucleoside 5'-triphosphate = RNA(n+1) + diphosphate</text>
        <dbReference type="Rhea" id="RHEA:21248"/>
        <dbReference type="Rhea" id="RHEA-COMP:14527"/>
        <dbReference type="Rhea" id="RHEA-COMP:17342"/>
        <dbReference type="ChEBI" id="CHEBI:33019"/>
        <dbReference type="ChEBI" id="CHEBI:61557"/>
        <dbReference type="ChEBI" id="CHEBI:140395"/>
        <dbReference type="EC" id="2.7.7.6"/>
    </reaction>
</comment>
<comment type="cofactor">
    <cofactor evidence="1">
        <name>Zn(2+)</name>
        <dbReference type="ChEBI" id="CHEBI:29105"/>
    </cofactor>
    <text evidence="1">Binds 1 Zn(2+) ion per subunit.</text>
</comment>
<comment type="subunit">
    <text evidence="1">In cyanobacteria the RNAP catalytic core is composed of 2 alpha, 1 beta, 1 beta', 1 gamma and 1 omega subunit. When a sigma factor is associated with the core the holoenzyme is formed, which can initiate transcription.</text>
</comment>
<comment type="similarity">
    <text evidence="1">Belongs to the RNA polymerase beta' chain family. RpoC2 subfamily.</text>
</comment>
<organism>
    <name type="scientific">Crocosphaera subtropica (strain ATCC 51142 / BH68)</name>
    <name type="common">Cyanothece sp. (strain ATCC 51142)</name>
    <dbReference type="NCBI Taxonomy" id="43989"/>
    <lineage>
        <taxon>Bacteria</taxon>
        <taxon>Bacillati</taxon>
        <taxon>Cyanobacteriota</taxon>
        <taxon>Cyanophyceae</taxon>
        <taxon>Oscillatoriophycideae</taxon>
        <taxon>Chroococcales</taxon>
        <taxon>Aphanothecaceae</taxon>
        <taxon>Crocosphaera</taxon>
        <taxon>Crocosphaera subtropica</taxon>
    </lineage>
</organism>
<gene>
    <name evidence="1" type="primary">rpoC2</name>
    <name type="ordered locus">cce_3487</name>
</gene>
<sequence>MTFYNQIVDKGRLKKLISWAYRNYGAARSSQVADNLKDLGFRYATKAGVSISIDDLTVPPTKRGMLDSAEKEINITEARYARGEITEVERFQKVIDTWNSTSEELKDEVVRNFRQTDPLNSVYMMAFSGARGNMSQVRQLVGMRGLMADPQGQIIDQPIKTNFREGLTVTEYVISSYGARKGLVDTALRTADSGYLTRRLVDVSQDVIVREIDCGTRRGLKVTAMKDGDRVKIALGDRLLGRVLAEDVMVGDEVIASRNQSIDAALAAKIGKSVESVMVRSPLTCEAARSVCRCCYGWSLATGRPVDLGEAVGIIAAQSIGEPGTQLTMRTFHTGGVFTGEVAEQIKAPDHGTVKWGKGLSTRKVRTRHGEDAFQVELAGDLIWTPTGSGKKMTYSVTPGSVLFAADGDTVEKDKMLAEVTAAKSTRSTERATKDVSTDLAGEVFFANLIAEEKTDRQGNTTHIAQRGGLVWVLSGEVYNLPPGAEPVVSNGDEVAEGTVLAETKLISVNGGVVRYQPQSREIDIITASVLLDQAEVRKESTGGHEQYVIYTADGQRFLLKATPETKVQNHAIIAELIDDRYQTTTGGMLRYGGIEVAKGSRKTGYEVVQGGTLLWVPEETHEVNKDISLLVVEDGQYVEAGTEVVKDIFCQCSGAIEVVQKNDILREIIIKPGEFHLDVDPDEVSYKNEDLIPPGTEVLPGVVTTDLRQVEWIESTEGLGLLLRPVEEYPVSNEPAAPSQGSINEEEVGRHIELRSVQRLFYKDGERVKSVDGIHLLSTQLVLEIETGSEQAAANLAADIELKNDEEEDCQRLQLVILESLILRRDLDTDPHGGTITTSVLVTDGDQIAPGAVVAKTEIQCREEGEVRGIRRGLEAVRRVLIVRDEDLEIITLKEKPTVAKDDLIVAGTEFAPGVVAAESGLVVAVNQGEEGYEIKLRLARPYRVSPGAILHIADGDLVQRGDNLVLLVYERAKTGDIIQGLPRIEELLEARKPKEACVLSRKPGVCQVEYLEDESVDVKVIEDDGTVSEYPILLNQNVIVSDNQRVDVGEHLTDGPANPHELLEVFFDYYVDKKGVYEAALIGLQAAQKFLVDQVQSVYQSQGIDISDKHIEVIVRQMTAKVRVDDGGDTTMLPGELVELRQIEQVNEAMAITGGAPARYTPVLLGITKASLNTDSFISAASFQETTRVLTEAAIEGKSDWLRGLKENVIIGRLIPAGTGFNAHEEMVMGTLDNGEDSLNNRYGQGERDNNNSDKKPPNRLIGATLDEVDENMILDDNIARAYTEADPPWSVESKQEKDDDDDK</sequence>
<evidence type="ECO:0000255" key="1">
    <source>
        <dbReference type="HAMAP-Rule" id="MF_01324"/>
    </source>
</evidence>
<evidence type="ECO:0000256" key="2">
    <source>
        <dbReference type="SAM" id="MobiDB-lite"/>
    </source>
</evidence>
<accession>B1WZT6</accession>
<protein>
    <recommendedName>
        <fullName evidence="1">DNA-directed RNA polymerase subunit beta'</fullName>
        <shortName evidence="1">RNAP subunit beta'</shortName>
        <ecNumber evidence="1">2.7.7.6</ecNumber>
    </recommendedName>
    <alternativeName>
        <fullName evidence="1">RNA polymerase subunit beta'</fullName>
    </alternativeName>
    <alternativeName>
        <fullName evidence="1">Transcriptase subunit beta'</fullName>
    </alternativeName>
</protein>
<proteinExistence type="inferred from homology"/>
<reference key="1">
    <citation type="journal article" date="2008" name="Proc. Natl. Acad. Sci. U.S.A.">
        <title>The genome of Cyanothece 51142, a unicellular diazotrophic cyanobacterium important in the marine nitrogen cycle.</title>
        <authorList>
            <person name="Welsh E.A."/>
            <person name="Liberton M."/>
            <person name="Stoeckel J."/>
            <person name="Loh T."/>
            <person name="Elvitigala T."/>
            <person name="Wang C."/>
            <person name="Wollam A."/>
            <person name="Fulton R.S."/>
            <person name="Clifton S.W."/>
            <person name="Jacobs J.M."/>
            <person name="Aurora R."/>
            <person name="Ghosh B.K."/>
            <person name="Sherman L.A."/>
            <person name="Smith R.D."/>
            <person name="Wilson R.K."/>
            <person name="Pakrasi H.B."/>
        </authorList>
    </citation>
    <scope>NUCLEOTIDE SEQUENCE [LARGE SCALE GENOMIC DNA]</scope>
    <source>
        <strain>ATCC 51142 / BH68</strain>
    </source>
</reference>
<feature type="chain" id="PRO_0000353521" description="DNA-directed RNA polymerase subunit beta'">
    <location>
        <begin position="1"/>
        <end position="1306"/>
    </location>
</feature>
<feature type="region of interest" description="Disordered" evidence="2">
    <location>
        <begin position="1234"/>
        <end position="1263"/>
    </location>
</feature>
<feature type="region of interest" description="Disordered" evidence="2">
    <location>
        <begin position="1281"/>
        <end position="1306"/>
    </location>
</feature>
<feature type="compositionally biased region" description="Basic and acidic residues" evidence="2">
    <location>
        <begin position="1247"/>
        <end position="1259"/>
    </location>
</feature>
<feature type="binding site" evidence="1">
    <location>
        <position position="214"/>
    </location>
    <ligand>
        <name>Zn(2+)</name>
        <dbReference type="ChEBI" id="CHEBI:29105"/>
    </ligand>
</feature>
<feature type="binding site" evidence="1">
    <location>
        <position position="285"/>
    </location>
    <ligand>
        <name>Zn(2+)</name>
        <dbReference type="ChEBI" id="CHEBI:29105"/>
    </ligand>
</feature>
<feature type="binding site" evidence="1">
    <location>
        <position position="292"/>
    </location>
    <ligand>
        <name>Zn(2+)</name>
        <dbReference type="ChEBI" id="CHEBI:29105"/>
    </ligand>
</feature>
<feature type="binding site" evidence="1">
    <location>
        <position position="295"/>
    </location>
    <ligand>
        <name>Zn(2+)</name>
        <dbReference type="ChEBI" id="CHEBI:29105"/>
    </ligand>
</feature>
<dbReference type="EC" id="2.7.7.6" evidence="1"/>
<dbReference type="EMBL" id="CP000806">
    <property type="protein sequence ID" value="ACB52835.1"/>
    <property type="molecule type" value="Genomic_DNA"/>
</dbReference>
<dbReference type="RefSeq" id="WP_009545345.1">
    <property type="nucleotide sequence ID" value="NC_010546.1"/>
</dbReference>
<dbReference type="SMR" id="B1WZT6"/>
<dbReference type="STRING" id="43989.cce_3487"/>
<dbReference type="KEGG" id="cyt:cce_3487"/>
<dbReference type="eggNOG" id="COG0086">
    <property type="taxonomic scope" value="Bacteria"/>
</dbReference>
<dbReference type="HOGENOM" id="CLU_000524_1_0_3"/>
<dbReference type="OrthoDB" id="9815296at2"/>
<dbReference type="Proteomes" id="UP000001203">
    <property type="component" value="Chromosome circular"/>
</dbReference>
<dbReference type="GO" id="GO:0000428">
    <property type="term" value="C:DNA-directed RNA polymerase complex"/>
    <property type="evidence" value="ECO:0007669"/>
    <property type="project" value="UniProtKB-KW"/>
</dbReference>
<dbReference type="GO" id="GO:0003677">
    <property type="term" value="F:DNA binding"/>
    <property type="evidence" value="ECO:0007669"/>
    <property type="project" value="UniProtKB-UniRule"/>
</dbReference>
<dbReference type="GO" id="GO:0003899">
    <property type="term" value="F:DNA-directed RNA polymerase activity"/>
    <property type="evidence" value="ECO:0007669"/>
    <property type="project" value="UniProtKB-UniRule"/>
</dbReference>
<dbReference type="GO" id="GO:0008270">
    <property type="term" value="F:zinc ion binding"/>
    <property type="evidence" value="ECO:0007669"/>
    <property type="project" value="UniProtKB-UniRule"/>
</dbReference>
<dbReference type="GO" id="GO:0006351">
    <property type="term" value="P:DNA-templated transcription"/>
    <property type="evidence" value="ECO:0007669"/>
    <property type="project" value="UniProtKB-UniRule"/>
</dbReference>
<dbReference type="CDD" id="cd02655">
    <property type="entry name" value="RNAP_beta'_C"/>
    <property type="match status" value="1"/>
</dbReference>
<dbReference type="FunFam" id="1.10.150.390:FF:000002">
    <property type="entry name" value="DNA-directed RNA polymerase subunit beta"/>
    <property type="match status" value="1"/>
</dbReference>
<dbReference type="Gene3D" id="1.10.132.30">
    <property type="match status" value="1"/>
</dbReference>
<dbReference type="Gene3D" id="1.10.150.390">
    <property type="match status" value="1"/>
</dbReference>
<dbReference type="Gene3D" id="1.10.1790.20">
    <property type="match status" value="1"/>
</dbReference>
<dbReference type="Gene3D" id="2.40.50.100">
    <property type="match status" value="2"/>
</dbReference>
<dbReference type="Gene3D" id="1.10.274.100">
    <property type="entry name" value="RNA polymerase Rpb1, domain 3"/>
    <property type="match status" value="1"/>
</dbReference>
<dbReference type="HAMAP" id="MF_01324">
    <property type="entry name" value="RNApol_bact_RpoC2"/>
    <property type="match status" value="1"/>
</dbReference>
<dbReference type="InterPro" id="IPR012756">
    <property type="entry name" value="DNA-dir_RpoC2_beta_pp"/>
</dbReference>
<dbReference type="InterPro" id="IPR045867">
    <property type="entry name" value="DNA-dir_RpoC_beta_prime"/>
</dbReference>
<dbReference type="InterPro" id="IPR007066">
    <property type="entry name" value="RNA_pol_Rpb1_3"/>
</dbReference>
<dbReference type="InterPro" id="IPR042102">
    <property type="entry name" value="RNA_pol_Rpb1_3_sf"/>
</dbReference>
<dbReference type="InterPro" id="IPR007083">
    <property type="entry name" value="RNA_pol_Rpb1_4"/>
</dbReference>
<dbReference type="InterPro" id="IPR007081">
    <property type="entry name" value="RNA_pol_Rpb1_5"/>
</dbReference>
<dbReference type="InterPro" id="IPR038120">
    <property type="entry name" value="Rpb1_funnel_sf"/>
</dbReference>
<dbReference type="NCBIfam" id="NF002724">
    <property type="entry name" value="PRK02597.1"/>
    <property type="match status" value="1"/>
</dbReference>
<dbReference type="NCBIfam" id="TIGR02388">
    <property type="entry name" value="rpoC2_cyan"/>
    <property type="match status" value="1"/>
</dbReference>
<dbReference type="PANTHER" id="PTHR19376">
    <property type="entry name" value="DNA-DIRECTED RNA POLYMERASE"/>
    <property type="match status" value="1"/>
</dbReference>
<dbReference type="PANTHER" id="PTHR19376:SF68">
    <property type="entry name" value="DNA-DIRECTED RNA POLYMERASE SUBUNIT BETA"/>
    <property type="match status" value="1"/>
</dbReference>
<dbReference type="Pfam" id="PF04983">
    <property type="entry name" value="RNA_pol_Rpb1_3"/>
    <property type="match status" value="1"/>
</dbReference>
<dbReference type="Pfam" id="PF05000">
    <property type="entry name" value="RNA_pol_Rpb1_4"/>
    <property type="match status" value="1"/>
</dbReference>
<dbReference type="Pfam" id="PF04998">
    <property type="entry name" value="RNA_pol_Rpb1_5"/>
    <property type="match status" value="2"/>
</dbReference>
<dbReference type="SUPFAM" id="SSF64484">
    <property type="entry name" value="beta and beta-prime subunits of DNA dependent RNA-polymerase"/>
    <property type="match status" value="1"/>
</dbReference>